<sequence>MEQINIQFPDGNKKAFDKGTTTEDIAQSISPGLRKKAVAGKFNGQLVDLTKPLETDGSIEIVTPVSEEALEVLRHSTAHLMAHAIKRLYGNVKFGVGPVIEGGFYYDFDIDQNISSDDFEQIEKTMKQIVNENMKIERKVVSRDEAKELFSNDEYKLELIDAIPEDENVTLYSQGDFTDLCRGVHVPSTAKIKEFKLLSTAGAYWRGDSNNKMLQRIYGTAFFDKKELKAHLQMLEERKERDHRKIGKELELFTNSQLVGAGLPLWLPNGATIRREIERYIVDKEVSMGYDHVYTPVLANVDLYKTSGHWDHYQEDMFPPMQLDETESMVLRPMNCPHHMMIYANKPHSYRELPIRIAELGTMHRYEASGAVSGLQRVRGMTLNDSHIFVRPDQIKEEFKRVVNMIIDVYKDFGFEDYSFRLSYRDPEDKEKYFDDDDMWNKAENMLKEAADELGLSYEEAIGEAAFYGPKLDVQVKTAMGKEETLSTAQLDFLLPERFDLTYIGQDGEHHRPVVIHRGVVSTMERFVAFLTEETKGAFPTWLAPKQVQIIPVNVDLHYDYARQLQDELKSQGVRVSIDDRNEKMGYKIREAQMQKTPYQIVVGDKEVENNQVNVRQYGSQDQETVEKDEFIWNLVDEIRLKKHR</sequence>
<organism>
    <name type="scientific">Staphylococcus aureus (strain bovine RF122 / ET3-1)</name>
    <dbReference type="NCBI Taxonomy" id="273036"/>
    <lineage>
        <taxon>Bacteria</taxon>
        <taxon>Bacillati</taxon>
        <taxon>Bacillota</taxon>
        <taxon>Bacilli</taxon>
        <taxon>Bacillales</taxon>
        <taxon>Staphylococcaceae</taxon>
        <taxon>Staphylococcus</taxon>
    </lineage>
</organism>
<name>SYT_STAAB</name>
<evidence type="ECO:0000255" key="1">
    <source>
        <dbReference type="HAMAP-Rule" id="MF_00184"/>
    </source>
</evidence>
<evidence type="ECO:0000255" key="2">
    <source>
        <dbReference type="PROSITE-ProRule" id="PRU01228"/>
    </source>
</evidence>
<dbReference type="EC" id="6.1.1.3" evidence="1"/>
<dbReference type="EMBL" id="AJ938182">
    <property type="protein sequence ID" value="CAI81231.1"/>
    <property type="molecule type" value="Genomic_DNA"/>
</dbReference>
<dbReference type="RefSeq" id="WP_000435142.1">
    <property type="nucleotide sequence ID" value="NC_007622.1"/>
</dbReference>
<dbReference type="SMR" id="Q2YTA7"/>
<dbReference type="KEGG" id="sab:SAB1542c"/>
<dbReference type="HOGENOM" id="CLU_008554_0_1_9"/>
<dbReference type="GO" id="GO:0005737">
    <property type="term" value="C:cytoplasm"/>
    <property type="evidence" value="ECO:0007669"/>
    <property type="project" value="UniProtKB-SubCell"/>
</dbReference>
<dbReference type="GO" id="GO:0005524">
    <property type="term" value="F:ATP binding"/>
    <property type="evidence" value="ECO:0007669"/>
    <property type="project" value="UniProtKB-UniRule"/>
</dbReference>
<dbReference type="GO" id="GO:0140096">
    <property type="term" value="F:catalytic activity, acting on a protein"/>
    <property type="evidence" value="ECO:0007669"/>
    <property type="project" value="UniProtKB-ARBA"/>
</dbReference>
<dbReference type="GO" id="GO:0046872">
    <property type="term" value="F:metal ion binding"/>
    <property type="evidence" value="ECO:0007669"/>
    <property type="project" value="UniProtKB-KW"/>
</dbReference>
<dbReference type="GO" id="GO:0004829">
    <property type="term" value="F:threonine-tRNA ligase activity"/>
    <property type="evidence" value="ECO:0007669"/>
    <property type="project" value="UniProtKB-UniRule"/>
</dbReference>
<dbReference type="GO" id="GO:0016740">
    <property type="term" value="F:transferase activity"/>
    <property type="evidence" value="ECO:0007669"/>
    <property type="project" value="UniProtKB-ARBA"/>
</dbReference>
<dbReference type="GO" id="GO:0000049">
    <property type="term" value="F:tRNA binding"/>
    <property type="evidence" value="ECO:0007669"/>
    <property type="project" value="UniProtKB-KW"/>
</dbReference>
<dbReference type="GO" id="GO:0006435">
    <property type="term" value="P:threonyl-tRNA aminoacylation"/>
    <property type="evidence" value="ECO:0007669"/>
    <property type="project" value="UniProtKB-UniRule"/>
</dbReference>
<dbReference type="CDD" id="cd01667">
    <property type="entry name" value="TGS_ThrRS"/>
    <property type="match status" value="1"/>
</dbReference>
<dbReference type="CDD" id="cd00860">
    <property type="entry name" value="ThrRS_anticodon"/>
    <property type="match status" value="1"/>
</dbReference>
<dbReference type="CDD" id="cd00771">
    <property type="entry name" value="ThrRS_core"/>
    <property type="match status" value="1"/>
</dbReference>
<dbReference type="FunFam" id="3.10.20.30:FF:000005">
    <property type="entry name" value="Threonine--tRNA ligase"/>
    <property type="match status" value="1"/>
</dbReference>
<dbReference type="FunFam" id="3.30.54.20:FF:000002">
    <property type="entry name" value="Threonine--tRNA ligase"/>
    <property type="match status" value="1"/>
</dbReference>
<dbReference type="FunFam" id="3.30.930.10:FF:000002">
    <property type="entry name" value="Threonine--tRNA ligase"/>
    <property type="match status" value="1"/>
</dbReference>
<dbReference type="FunFam" id="3.40.50.800:FF:000001">
    <property type="entry name" value="Threonine--tRNA ligase"/>
    <property type="match status" value="1"/>
</dbReference>
<dbReference type="FunFam" id="3.30.980.10:FF:000005">
    <property type="entry name" value="Threonyl-tRNA synthetase, mitochondrial"/>
    <property type="match status" value="1"/>
</dbReference>
<dbReference type="Gene3D" id="3.10.20.30">
    <property type="match status" value="1"/>
</dbReference>
<dbReference type="Gene3D" id="3.30.54.20">
    <property type="match status" value="1"/>
</dbReference>
<dbReference type="Gene3D" id="3.40.50.800">
    <property type="entry name" value="Anticodon-binding domain"/>
    <property type="match status" value="1"/>
</dbReference>
<dbReference type="Gene3D" id="3.30.930.10">
    <property type="entry name" value="Bira Bifunctional Protein, Domain 2"/>
    <property type="match status" value="1"/>
</dbReference>
<dbReference type="Gene3D" id="3.30.980.10">
    <property type="entry name" value="Threonyl-trna Synthetase, Chain A, domain 2"/>
    <property type="match status" value="1"/>
</dbReference>
<dbReference type="HAMAP" id="MF_00184">
    <property type="entry name" value="Thr_tRNA_synth"/>
    <property type="match status" value="1"/>
</dbReference>
<dbReference type="InterPro" id="IPR002314">
    <property type="entry name" value="aa-tRNA-synt_IIb"/>
</dbReference>
<dbReference type="InterPro" id="IPR006195">
    <property type="entry name" value="aa-tRNA-synth_II"/>
</dbReference>
<dbReference type="InterPro" id="IPR045864">
    <property type="entry name" value="aa-tRNA-synth_II/BPL/LPL"/>
</dbReference>
<dbReference type="InterPro" id="IPR004154">
    <property type="entry name" value="Anticodon-bd"/>
</dbReference>
<dbReference type="InterPro" id="IPR036621">
    <property type="entry name" value="Anticodon-bd_dom_sf"/>
</dbReference>
<dbReference type="InterPro" id="IPR012675">
    <property type="entry name" value="Beta-grasp_dom_sf"/>
</dbReference>
<dbReference type="InterPro" id="IPR004095">
    <property type="entry name" value="TGS"/>
</dbReference>
<dbReference type="InterPro" id="IPR012676">
    <property type="entry name" value="TGS-like"/>
</dbReference>
<dbReference type="InterPro" id="IPR002320">
    <property type="entry name" value="Thr-tRNA-ligase_IIa"/>
</dbReference>
<dbReference type="InterPro" id="IPR018163">
    <property type="entry name" value="Thr/Ala-tRNA-synth_IIc_edit"/>
</dbReference>
<dbReference type="InterPro" id="IPR047246">
    <property type="entry name" value="ThrRS_anticodon"/>
</dbReference>
<dbReference type="InterPro" id="IPR033728">
    <property type="entry name" value="ThrRS_core"/>
</dbReference>
<dbReference type="InterPro" id="IPR012947">
    <property type="entry name" value="tRNA_SAD"/>
</dbReference>
<dbReference type="NCBIfam" id="TIGR00418">
    <property type="entry name" value="thrS"/>
    <property type="match status" value="1"/>
</dbReference>
<dbReference type="PANTHER" id="PTHR11451:SF56">
    <property type="entry name" value="THREONINE--TRNA LIGASE 1"/>
    <property type="match status" value="1"/>
</dbReference>
<dbReference type="PANTHER" id="PTHR11451">
    <property type="entry name" value="THREONINE-TRNA LIGASE"/>
    <property type="match status" value="1"/>
</dbReference>
<dbReference type="Pfam" id="PF03129">
    <property type="entry name" value="HGTP_anticodon"/>
    <property type="match status" value="1"/>
</dbReference>
<dbReference type="Pfam" id="PF02824">
    <property type="entry name" value="TGS"/>
    <property type="match status" value="1"/>
</dbReference>
<dbReference type="Pfam" id="PF00587">
    <property type="entry name" value="tRNA-synt_2b"/>
    <property type="match status" value="1"/>
</dbReference>
<dbReference type="Pfam" id="PF07973">
    <property type="entry name" value="tRNA_SAD"/>
    <property type="match status" value="1"/>
</dbReference>
<dbReference type="PRINTS" id="PR01047">
    <property type="entry name" value="TRNASYNTHTHR"/>
</dbReference>
<dbReference type="SMART" id="SM00863">
    <property type="entry name" value="tRNA_SAD"/>
    <property type="match status" value="1"/>
</dbReference>
<dbReference type="SUPFAM" id="SSF52954">
    <property type="entry name" value="Class II aaRS ABD-related"/>
    <property type="match status" value="1"/>
</dbReference>
<dbReference type="SUPFAM" id="SSF55681">
    <property type="entry name" value="Class II aaRS and biotin synthetases"/>
    <property type="match status" value="1"/>
</dbReference>
<dbReference type="SUPFAM" id="SSF81271">
    <property type="entry name" value="TGS-like"/>
    <property type="match status" value="1"/>
</dbReference>
<dbReference type="SUPFAM" id="SSF55186">
    <property type="entry name" value="ThrRS/AlaRS common domain"/>
    <property type="match status" value="1"/>
</dbReference>
<dbReference type="PROSITE" id="PS50862">
    <property type="entry name" value="AA_TRNA_LIGASE_II"/>
    <property type="match status" value="1"/>
</dbReference>
<dbReference type="PROSITE" id="PS51880">
    <property type="entry name" value="TGS"/>
    <property type="match status" value="1"/>
</dbReference>
<reference key="1">
    <citation type="journal article" date="2007" name="PLoS ONE">
        <title>Molecular correlates of host specialization in Staphylococcus aureus.</title>
        <authorList>
            <person name="Herron-Olson L."/>
            <person name="Fitzgerald J.R."/>
            <person name="Musser J.M."/>
            <person name="Kapur V."/>
        </authorList>
    </citation>
    <scope>NUCLEOTIDE SEQUENCE [LARGE SCALE GENOMIC DNA]</scope>
    <source>
        <strain>bovine RF122 / ET3-1</strain>
    </source>
</reference>
<comment type="function">
    <text evidence="1">Catalyzes the attachment of threonine to tRNA(Thr) in a two-step reaction: L-threonine is first activated by ATP to form Thr-AMP and then transferred to the acceptor end of tRNA(Thr). Also edits incorrectly charged L-seryl-tRNA(Thr).</text>
</comment>
<comment type="catalytic activity">
    <reaction evidence="1">
        <text>tRNA(Thr) + L-threonine + ATP = L-threonyl-tRNA(Thr) + AMP + diphosphate + H(+)</text>
        <dbReference type="Rhea" id="RHEA:24624"/>
        <dbReference type="Rhea" id="RHEA-COMP:9670"/>
        <dbReference type="Rhea" id="RHEA-COMP:9704"/>
        <dbReference type="ChEBI" id="CHEBI:15378"/>
        <dbReference type="ChEBI" id="CHEBI:30616"/>
        <dbReference type="ChEBI" id="CHEBI:33019"/>
        <dbReference type="ChEBI" id="CHEBI:57926"/>
        <dbReference type="ChEBI" id="CHEBI:78442"/>
        <dbReference type="ChEBI" id="CHEBI:78534"/>
        <dbReference type="ChEBI" id="CHEBI:456215"/>
        <dbReference type="EC" id="6.1.1.3"/>
    </reaction>
</comment>
<comment type="cofactor">
    <cofactor evidence="1">
        <name>Zn(2+)</name>
        <dbReference type="ChEBI" id="CHEBI:29105"/>
    </cofactor>
    <text evidence="1">Binds 1 zinc ion per subunit.</text>
</comment>
<comment type="subunit">
    <text evidence="1">Homodimer.</text>
</comment>
<comment type="subcellular location">
    <subcellularLocation>
        <location evidence="1">Cytoplasm</location>
    </subcellularLocation>
</comment>
<comment type="similarity">
    <text evidence="1">Belongs to the class-II aminoacyl-tRNA synthetase family.</text>
</comment>
<feature type="chain" id="PRO_1000020522" description="Threonine--tRNA ligase">
    <location>
        <begin position="1"/>
        <end position="645"/>
    </location>
</feature>
<feature type="domain" description="TGS" evidence="2">
    <location>
        <begin position="1"/>
        <end position="63"/>
    </location>
</feature>
<feature type="region of interest" description="Catalytic" evidence="1">
    <location>
        <begin position="242"/>
        <end position="540"/>
    </location>
</feature>
<feature type="binding site" evidence="1">
    <location>
        <position position="336"/>
    </location>
    <ligand>
        <name>Zn(2+)</name>
        <dbReference type="ChEBI" id="CHEBI:29105"/>
    </ligand>
</feature>
<feature type="binding site" evidence="1">
    <location>
        <position position="387"/>
    </location>
    <ligand>
        <name>Zn(2+)</name>
        <dbReference type="ChEBI" id="CHEBI:29105"/>
    </ligand>
</feature>
<feature type="binding site" evidence="1">
    <location>
        <position position="517"/>
    </location>
    <ligand>
        <name>Zn(2+)</name>
        <dbReference type="ChEBI" id="CHEBI:29105"/>
    </ligand>
</feature>
<protein>
    <recommendedName>
        <fullName evidence="1">Threonine--tRNA ligase</fullName>
        <ecNumber evidence="1">6.1.1.3</ecNumber>
    </recommendedName>
    <alternativeName>
        <fullName evidence="1">Threonyl-tRNA synthetase</fullName>
        <shortName evidence="1">ThrRS</shortName>
    </alternativeName>
</protein>
<gene>
    <name evidence="1" type="primary">thrS</name>
    <name type="ordered locus">SAB1542c</name>
</gene>
<accession>Q2YTA7</accession>
<proteinExistence type="inferred from homology"/>
<keyword id="KW-0030">Aminoacyl-tRNA synthetase</keyword>
<keyword id="KW-0067">ATP-binding</keyword>
<keyword id="KW-0963">Cytoplasm</keyword>
<keyword id="KW-0436">Ligase</keyword>
<keyword id="KW-0479">Metal-binding</keyword>
<keyword id="KW-0547">Nucleotide-binding</keyword>
<keyword id="KW-0648">Protein biosynthesis</keyword>
<keyword id="KW-0694">RNA-binding</keyword>
<keyword id="KW-0820">tRNA-binding</keyword>
<keyword id="KW-0862">Zinc</keyword>